<dbReference type="EC" id="5.6.2.4" evidence="5"/>
<dbReference type="EMBL" id="BA000023">
    <property type="protein sequence ID" value="BAB66691.1"/>
    <property type="molecule type" value="Genomic_DNA"/>
</dbReference>
<dbReference type="RefSeq" id="WP_010979669.1">
    <property type="nucleotide sequence ID" value="NC_003106.2"/>
</dbReference>
<dbReference type="PDB" id="5TNU">
    <property type="method" value="X-ray"/>
    <property type="resolution" value="3.05 A"/>
    <property type="chains" value="A/B=1-439"/>
</dbReference>
<dbReference type="PDB" id="6P4F">
    <property type="method" value="X-ray"/>
    <property type="resolution" value="3.55 A"/>
    <property type="chains" value="A/C=1-439"/>
</dbReference>
<dbReference type="PDB" id="6P4O">
    <property type="method" value="X-ray"/>
    <property type="resolution" value="3.15 A"/>
    <property type="chains" value="A/C/E=1-439"/>
</dbReference>
<dbReference type="PDB" id="6P4W">
    <property type="method" value="X-ray"/>
    <property type="resolution" value="2.96 A"/>
    <property type="chains" value="A/C=2-439"/>
</dbReference>
<dbReference type="PDBsum" id="5TNU"/>
<dbReference type="PDBsum" id="6P4F"/>
<dbReference type="PDBsum" id="6P4O"/>
<dbReference type="PDBsum" id="6P4W"/>
<dbReference type="SMR" id="Q970I2"/>
<dbReference type="STRING" id="273063.STK_16130"/>
<dbReference type="GeneID" id="1459655"/>
<dbReference type="KEGG" id="sto:STK_16130"/>
<dbReference type="PATRIC" id="fig|273063.9.peg.1839"/>
<dbReference type="eggNOG" id="arCOG00874">
    <property type="taxonomic scope" value="Archaea"/>
</dbReference>
<dbReference type="OrthoDB" id="11644at2157"/>
<dbReference type="Proteomes" id="UP000001015">
    <property type="component" value="Chromosome"/>
</dbReference>
<dbReference type="GO" id="GO:0005524">
    <property type="term" value="F:ATP binding"/>
    <property type="evidence" value="ECO:0007669"/>
    <property type="project" value="UniProtKB-KW"/>
</dbReference>
<dbReference type="GO" id="GO:0140097">
    <property type="term" value="F:catalytic activity, acting on DNA"/>
    <property type="evidence" value="ECO:0007669"/>
    <property type="project" value="UniProtKB-ARBA"/>
</dbReference>
<dbReference type="GO" id="GO:0003677">
    <property type="term" value="F:DNA binding"/>
    <property type="evidence" value="ECO:0007669"/>
    <property type="project" value="UniProtKB-KW"/>
</dbReference>
<dbReference type="GO" id="GO:0004386">
    <property type="term" value="F:helicase activity"/>
    <property type="evidence" value="ECO:0007669"/>
    <property type="project" value="UniProtKB-KW"/>
</dbReference>
<dbReference type="GO" id="GO:0016787">
    <property type="term" value="F:hydrolase activity"/>
    <property type="evidence" value="ECO:0007669"/>
    <property type="project" value="UniProtKB-KW"/>
</dbReference>
<dbReference type="GO" id="GO:0006281">
    <property type="term" value="P:DNA repair"/>
    <property type="evidence" value="ECO:0007669"/>
    <property type="project" value="UniProtKB-KW"/>
</dbReference>
<dbReference type="CDD" id="cd17926">
    <property type="entry name" value="DEXHc_RE"/>
    <property type="match status" value="1"/>
</dbReference>
<dbReference type="CDD" id="cd18789">
    <property type="entry name" value="SF2_C_XPB"/>
    <property type="match status" value="1"/>
</dbReference>
<dbReference type="Gene3D" id="3.40.50.300">
    <property type="entry name" value="P-loop containing nucleotide triphosphate hydrolases"/>
    <property type="match status" value="2"/>
</dbReference>
<dbReference type="InterPro" id="IPR050615">
    <property type="entry name" value="ATP-dep_DNA_Helicase"/>
</dbReference>
<dbReference type="InterPro" id="IPR006935">
    <property type="entry name" value="Helicase/UvrB_N"/>
</dbReference>
<dbReference type="InterPro" id="IPR014001">
    <property type="entry name" value="Helicase_ATP-bd"/>
</dbReference>
<dbReference type="InterPro" id="IPR001650">
    <property type="entry name" value="Helicase_C-like"/>
</dbReference>
<dbReference type="InterPro" id="IPR027417">
    <property type="entry name" value="P-loop_NTPase"/>
</dbReference>
<dbReference type="InterPro" id="IPR040699">
    <property type="entry name" value="XPB_DRD"/>
</dbReference>
<dbReference type="PANTHER" id="PTHR11274:SF0">
    <property type="entry name" value="GENERAL TRANSCRIPTION AND DNA REPAIR FACTOR IIH HELICASE SUBUNIT XPB"/>
    <property type="match status" value="1"/>
</dbReference>
<dbReference type="PANTHER" id="PTHR11274">
    <property type="entry name" value="RAD25/XP-B DNA REPAIR HELICASE"/>
    <property type="match status" value="1"/>
</dbReference>
<dbReference type="Pfam" id="PF00271">
    <property type="entry name" value="Helicase_C"/>
    <property type="match status" value="1"/>
</dbReference>
<dbReference type="Pfam" id="PF04851">
    <property type="entry name" value="ResIII"/>
    <property type="match status" value="1"/>
</dbReference>
<dbReference type="Pfam" id="PF18458">
    <property type="entry name" value="XPB_DRD"/>
    <property type="match status" value="1"/>
</dbReference>
<dbReference type="SMART" id="SM00487">
    <property type="entry name" value="DEXDc"/>
    <property type="match status" value="1"/>
</dbReference>
<dbReference type="SMART" id="SM00490">
    <property type="entry name" value="HELICc"/>
    <property type="match status" value="1"/>
</dbReference>
<dbReference type="SUPFAM" id="SSF52540">
    <property type="entry name" value="P-loop containing nucleoside triphosphate hydrolases"/>
    <property type="match status" value="1"/>
</dbReference>
<dbReference type="PROSITE" id="PS51192">
    <property type="entry name" value="HELICASE_ATP_BIND_1"/>
    <property type="match status" value="1"/>
</dbReference>
<dbReference type="PROSITE" id="PS51194">
    <property type="entry name" value="HELICASE_CTER"/>
    <property type="match status" value="1"/>
</dbReference>
<accession>Q970I2</accession>
<comment type="function">
    <text evidence="4 6 7 8">ATP-dependent DNA translocase which moves along double-stranded DNA (dsDNA) in a 3'-5' direction, unwinding the DNA (PubMed:32986831, PubMed:37874269). The ThM domain grips the resulting 3'-ssDNA tail and functions as a wedge (particularly Phe-278), breaking dsDNA base pairs, probably using the energy from ATP hydrolysis to move along dsDNA (PubMed:32986831). A DNA-dependent ATPase; double-stranded DNA (dsDNA) stimulates the activity more than single-stranded DNA (ssDNA), while Bax1 stimulates ATPase more (PubMed:21132514, PubMed:32986831). In an in vitro assay had no detectable helicase activity (PubMed:21132514). Binds ssDNA better than dsDNA (PubMed:21132514). Has very low ATPase activity that is stimulated by Bax1; dsDNA, Y-form DNA and a DNA substrate with a 6 base pair (bp) bubble in the center stimulate the XPB2-Bax1 ATPase activity about 10- 20-fold more than the absence of DNA (PubMed:32374860, PubMed:32986831). In an XPB2-Bax1-bubble DNA crystal (12 bp of dsDNA, a 6 base bubble and 6 bp of dsDNA) the short 6 bp arm is unwound. The 2 helicase and the ThM domains of XPB2 with the NTD and CRD domains of Bax1 encircle the DNA, forming a tunnel where the 12 bp dsDNA and the ds-ssDNA junction are located (PubMed:32986831). The ThM domain is wedged between the ssDNA tails, with the 5' ssDNA contacting Bax1 and the 3' ssDNA in a channel in XPB2 (PubMed:32986831). Bax1 increases the affinity of XPB2 for forked DNA (PubMed:32986831).</text>
</comment>
<comment type="catalytic activity">
    <reaction evidence="5 14">
        <text>Couples ATP hydrolysis with the unwinding of duplex DNA by translocating in the 3'-5' direction.</text>
        <dbReference type="EC" id="5.6.2.4"/>
    </reaction>
</comment>
<comment type="catalytic activity">
    <reaction evidence="4 6 7">
        <text>ATP + H2O = ADP + phosphate + H(+)</text>
        <dbReference type="Rhea" id="RHEA:13065"/>
        <dbReference type="ChEBI" id="CHEBI:15377"/>
        <dbReference type="ChEBI" id="CHEBI:15378"/>
        <dbReference type="ChEBI" id="CHEBI:30616"/>
        <dbReference type="ChEBI" id="CHEBI:43474"/>
        <dbReference type="ChEBI" id="CHEBI:456216"/>
        <dbReference type="EC" id="5.6.2.4"/>
    </reaction>
</comment>
<comment type="subunit">
    <text evidence="4 6">Forms a heterodimer with Bax1 (PubMed:21132514, PubMed:32374860, PubMed:32986831).</text>
</comment>
<comment type="domain">
    <text evidence="1 6 7">The C-terminus binds Bax1 (PubMed:32374860). The N- and C-terminal domains are joined by a flexible hinge region which allows the two domains to rotate and form either an open conformation or closed formation (PubMed:32374860, PubMed:32986831). The ThM region is involved in interactions with Bax1 (PubMed:32374860). In complex with a partially unwound DNA bubble substrate the ThM domain and RED motif contact the ds-ssDNA junction; both are important for binding to bubble DNA substrates (PubMed:32986831). The DRD domain (residues 1-54) structurally resembles the mismatch recognition domain of MutS (By similarity).</text>
</comment>
<comment type="miscellaneous">
    <text evidence="14">Conventional DNA helicases unwind DNA by binding to a ssDNA overhang of dsDNA and then translocating on this strand with cycles of ATP binding and hydrolysis to 'unzip' the dsDNA. XPB2 is believed to be an unconventional DNA helicase principally because it translocates in a 3'-5' direction along dsDNA instead of ssDNA, thus it is referred to as a DNA translocase.</text>
</comment>
<comment type="similarity">
    <text evidence="12">Belongs to the helicase family. RAD25/XPB subfamily.</text>
</comment>
<name>XPB2_SULTO</name>
<evidence type="ECO:0000250" key="1">
    <source>
        <dbReference type="UniProtKB" id="O29889"/>
    </source>
</evidence>
<evidence type="ECO:0000255" key="2">
    <source>
        <dbReference type="PROSITE-ProRule" id="PRU00541"/>
    </source>
</evidence>
<evidence type="ECO:0000255" key="3">
    <source>
        <dbReference type="PROSITE-ProRule" id="PRU00542"/>
    </source>
</evidence>
<evidence type="ECO:0000269" key="4">
    <source>
    </source>
</evidence>
<evidence type="ECO:0000269" key="5">
    <source>
    </source>
</evidence>
<evidence type="ECO:0000269" key="6">
    <source>
    </source>
</evidence>
<evidence type="ECO:0000269" key="7">
    <source>
    </source>
</evidence>
<evidence type="ECO:0000269" key="8">
    <source>
    </source>
</evidence>
<evidence type="ECO:0000303" key="9">
    <source>
    </source>
</evidence>
<evidence type="ECO:0000303" key="10">
    <source>
    </source>
</evidence>
<evidence type="ECO:0000303" key="11">
    <source>
    </source>
</evidence>
<evidence type="ECO:0000305" key="12"/>
<evidence type="ECO:0000305" key="13">
    <source>
    </source>
</evidence>
<evidence type="ECO:0000305" key="14">
    <source>
    </source>
</evidence>
<evidence type="ECO:0000312" key="15">
    <source>
        <dbReference type="EMBL" id="BAB66691.1"/>
    </source>
</evidence>
<evidence type="ECO:0007744" key="16">
    <source>
        <dbReference type="PDB" id="5TNU"/>
    </source>
</evidence>
<evidence type="ECO:0007744" key="17">
    <source>
        <dbReference type="PDB" id="6P4F"/>
    </source>
</evidence>
<evidence type="ECO:0007744" key="18">
    <source>
        <dbReference type="PDB" id="6P4O"/>
    </source>
</evidence>
<evidence type="ECO:0007744" key="19">
    <source>
        <dbReference type="PDB" id="6P4W"/>
    </source>
</evidence>
<evidence type="ECO:0007829" key="20">
    <source>
        <dbReference type="PDB" id="5TNU"/>
    </source>
</evidence>
<evidence type="ECO:0007829" key="21">
    <source>
        <dbReference type="PDB" id="6P4O"/>
    </source>
</evidence>
<evidence type="ECO:0007829" key="22">
    <source>
        <dbReference type="PDB" id="6P4W"/>
    </source>
</evidence>
<proteinExistence type="evidence at protein level"/>
<feature type="chain" id="PRO_0000460186" description="DNA 3'-5' translocase XPB2">
    <location>
        <begin position="1"/>
        <end position="439"/>
    </location>
</feature>
<feature type="domain" description="Helicase ATP-binding" evidence="2">
    <location>
        <begin position="77"/>
        <end position="221"/>
    </location>
</feature>
<feature type="domain" description="Helicase C-terminal" evidence="3">
    <location>
        <begin position="311"/>
        <end position="439"/>
    </location>
</feature>
<feature type="region of interest" description="DRD domain" evidence="6">
    <location>
        <begin position="1"/>
        <end position="54"/>
    </location>
</feature>
<feature type="region of interest" description="Flexible hinge region" evidence="13">
    <location>
        <begin position="227"/>
        <end position="234"/>
    </location>
</feature>
<feature type="region of interest" description="ThM region" evidence="6 7">
    <location>
        <begin position="248"/>
        <end position="307"/>
    </location>
</feature>
<feature type="short sequence motif" description="DEAH box" evidence="2">
    <location>
        <begin position="174"/>
        <end position="177"/>
    </location>
</feature>
<feature type="short sequence motif" description="RED motif" evidence="6 7">
    <location>
        <begin position="205"/>
        <end position="207"/>
    </location>
</feature>
<feature type="binding site" evidence="2 14">
    <location>
        <begin position="90"/>
        <end position="97"/>
    </location>
    <ligand>
        <name>ATP</name>
        <dbReference type="ChEBI" id="CHEBI:30616"/>
    </ligand>
</feature>
<feature type="binding site" evidence="14">
    <location>
        <position position="127"/>
    </location>
    <ligand>
        <name>ATP</name>
        <dbReference type="ChEBI" id="CHEBI:30616"/>
    </ligand>
</feature>
<feature type="site" description="Wedge residue" evidence="7">
    <location>
        <position position="278"/>
    </location>
</feature>
<feature type="mutagenesis site" description="Small decrease in affinity for forked DNA, 30% ATPase activity with and without Bax1, decreased affinity of XPB2 for bubble DNA." evidence="7">
    <original>RDD</original>
    <variation>AAA</variation>
    <location>
        <begin position="205"/>
        <end position="207"/>
    </location>
</feature>
<feature type="mutagenesis site" description="Decreased affinity for forked DNA, about 10% ATPase activity in presence of disorted DNA and Bax1, unstable without Bax1." evidence="7">
    <location>
        <begin position="258"/>
        <end position="299"/>
    </location>
</feature>
<feature type="mutagenesis site" description="Decreased affinity for forked DNA, 50% ATPase activity with and without Bax1, decreased affinity of XPB2 for bubble DNA." evidence="7">
    <location>
        <begin position="270"/>
        <end position="280"/>
    </location>
</feature>
<feature type="mutagenesis site" description="No change in recognition of 5 base bubble DNA, decreased ATPase activity with and without Bax1." evidence="7">
    <original>F</original>
    <variation>A</variation>
    <location>
        <position position="278"/>
    </location>
</feature>
<feature type="strand" evidence="22">
    <location>
        <begin position="2"/>
        <end position="7"/>
    </location>
</feature>
<feature type="strand" evidence="22">
    <location>
        <begin position="10"/>
        <end position="15"/>
    </location>
</feature>
<feature type="strand" evidence="22">
    <location>
        <begin position="21"/>
        <end position="23"/>
    </location>
</feature>
<feature type="turn" evidence="22">
    <location>
        <begin position="24"/>
        <end position="27"/>
    </location>
</feature>
<feature type="strand" evidence="22">
    <location>
        <begin position="28"/>
        <end position="32"/>
    </location>
</feature>
<feature type="helix" evidence="22">
    <location>
        <begin position="33"/>
        <end position="35"/>
    </location>
</feature>
<feature type="helix" evidence="22">
    <location>
        <begin position="36"/>
        <end position="44"/>
    </location>
</feature>
<feature type="turn" evidence="22">
    <location>
        <begin position="45"/>
        <end position="47"/>
    </location>
</feature>
<feature type="strand" evidence="22">
    <location>
        <begin position="49"/>
        <end position="53"/>
    </location>
</feature>
<feature type="helix" evidence="22">
    <location>
        <begin position="71"/>
        <end position="83"/>
    </location>
</feature>
<feature type="strand" evidence="22">
    <location>
        <begin position="84"/>
        <end position="89"/>
    </location>
</feature>
<feature type="helix" evidence="22">
    <location>
        <begin position="96"/>
        <end position="107"/>
    </location>
</feature>
<feature type="strand" evidence="22">
    <location>
        <begin position="111"/>
        <end position="117"/>
    </location>
</feature>
<feature type="helix" evidence="22">
    <location>
        <begin position="118"/>
        <end position="132"/>
    </location>
</feature>
<feature type="strand" evidence="22">
    <location>
        <begin position="137"/>
        <end position="140"/>
    </location>
</feature>
<feature type="strand" evidence="22">
    <location>
        <begin position="148"/>
        <end position="153"/>
    </location>
</feature>
<feature type="helix" evidence="22">
    <location>
        <begin position="154"/>
        <end position="159"/>
    </location>
</feature>
<feature type="helix" evidence="22">
    <location>
        <begin position="161"/>
        <end position="164"/>
    </location>
</feature>
<feature type="turn" evidence="22">
    <location>
        <begin position="165"/>
        <end position="167"/>
    </location>
</feature>
<feature type="strand" evidence="22">
    <location>
        <begin position="169"/>
        <end position="175"/>
    </location>
</feature>
<feature type="helix" evidence="22">
    <location>
        <begin position="176"/>
        <end position="178"/>
    </location>
</feature>
<feature type="helix" evidence="22">
    <location>
        <begin position="182"/>
        <end position="190"/>
    </location>
</feature>
<feature type="strand" evidence="22">
    <location>
        <begin position="194"/>
        <end position="201"/>
    </location>
</feature>
<feature type="helix" evidence="22">
    <location>
        <begin position="209"/>
        <end position="212"/>
    </location>
</feature>
<feature type="helix" evidence="22">
    <location>
        <begin position="213"/>
        <end position="216"/>
    </location>
</feature>
<feature type="strand" evidence="22">
    <location>
        <begin position="220"/>
        <end position="223"/>
    </location>
</feature>
<feature type="helix" evidence="22">
    <location>
        <begin position="226"/>
        <end position="229"/>
    </location>
</feature>
<feature type="turn" evidence="22">
    <location>
        <begin position="232"/>
        <end position="234"/>
    </location>
</feature>
<feature type="strand" evidence="22">
    <location>
        <begin position="235"/>
        <end position="244"/>
    </location>
</feature>
<feature type="helix" evidence="22">
    <location>
        <begin position="248"/>
        <end position="267"/>
    </location>
</feature>
<feature type="helix" evidence="22">
    <location>
        <begin position="275"/>
        <end position="285"/>
    </location>
</feature>
<feature type="helix" evidence="22">
    <location>
        <begin position="289"/>
        <end position="306"/>
    </location>
</feature>
<feature type="helix" evidence="22">
    <location>
        <begin position="309"/>
        <end position="321"/>
    </location>
</feature>
<feature type="turn" evidence="22">
    <location>
        <begin position="322"/>
        <end position="324"/>
    </location>
</feature>
<feature type="strand" evidence="22">
    <location>
        <begin position="327"/>
        <end position="333"/>
    </location>
</feature>
<feature type="helix" evidence="22">
    <location>
        <begin position="334"/>
        <end position="344"/>
    </location>
</feature>
<feature type="strand" evidence="20">
    <location>
        <begin position="351"/>
        <end position="353"/>
    </location>
</feature>
<feature type="helix" evidence="22">
    <location>
        <begin position="355"/>
        <end position="366"/>
    </location>
</feature>
<feature type="strand" evidence="22">
    <location>
        <begin position="371"/>
        <end position="376"/>
    </location>
</feature>
<feature type="strand" evidence="21">
    <location>
        <begin position="378"/>
        <end position="380"/>
    </location>
</feature>
<feature type="strand" evidence="22">
    <location>
        <begin position="389"/>
        <end position="393"/>
    </location>
</feature>
<feature type="helix" evidence="20">
    <location>
        <begin position="396"/>
        <end position="399"/>
    </location>
</feature>
<feature type="helix" evidence="22">
    <location>
        <begin position="401"/>
        <end position="412"/>
    </location>
</feature>
<feature type="strand" evidence="22">
    <location>
        <begin position="416"/>
        <end position="428"/>
    </location>
</feature>
<feature type="helix" evidence="20">
    <location>
        <begin position="429"/>
        <end position="434"/>
    </location>
</feature>
<keyword id="KW-0002">3D-structure</keyword>
<keyword id="KW-0067">ATP-binding</keyword>
<keyword id="KW-0227">DNA damage</keyword>
<keyword id="KW-0234">DNA repair</keyword>
<keyword id="KW-0238">DNA-binding</keyword>
<keyword id="KW-0347">Helicase</keyword>
<keyword id="KW-0378">Hydrolase</keyword>
<keyword id="KW-0413">Isomerase</keyword>
<keyword id="KW-0547">Nucleotide-binding</keyword>
<keyword id="KW-1185">Reference proteome</keyword>
<protein>
    <recommendedName>
        <fullName evidence="10 11">DNA 3'-5' translocase XPB2</fullName>
        <shortName evidence="10">StXPB2</shortName>
        <ecNumber evidence="5">5.6.2.4</ecNumber>
    </recommendedName>
    <alternativeName>
        <fullName evidence="9">StoXPBII</fullName>
    </alternativeName>
</protein>
<reference evidence="15" key="1">
    <citation type="journal article" date="2001" name="DNA Res.">
        <title>Complete genome sequence of an aerobic thermoacidophilic Crenarchaeon, Sulfolobus tokodaii strain7.</title>
        <authorList>
            <person name="Kawarabayasi Y."/>
            <person name="Hino Y."/>
            <person name="Horikawa H."/>
            <person name="Jin-no K."/>
            <person name="Takahashi M."/>
            <person name="Sekine M."/>
            <person name="Baba S."/>
            <person name="Ankai A."/>
            <person name="Kosugi H."/>
            <person name="Hosoyama A."/>
            <person name="Fukui S."/>
            <person name="Nagai Y."/>
            <person name="Nishijima K."/>
            <person name="Otsuka R."/>
            <person name="Nakazawa H."/>
            <person name="Takamiya M."/>
            <person name="Kato Y."/>
            <person name="Yoshizawa T."/>
            <person name="Tanaka T."/>
            <person name="Kudoh Y."/>
            <person name="Yamazaki J."/>
            <person name="Kushida N."/>
            <person name="Oguchi A."/>
            <person name="Aoki K."/>
            <person name="Masuda S."/>
            <person name="Yanagii M."/>
            <person name="Nishimura M."/>
            <person name="Yamagishi A."/>
            <person name="Oshima T."/>
            <person name="Kikuchi H."/>
        </authorList>
    </citation>
    <scope>NUCLEOTIDE SEQUENCE [LARGE SCALE GENOMIC DNA]</scope>
    <source>
        <strain>DSM 16993 / JCM 10545 / NBRC 100140 / 7</strain>
    </source>
</reference>
<reference key="2">
    <citation type="journal article" date="2011" name="Extremophiles">
        <title>Single-stranded DNA binding activity of XPBI, but not XPBII, from Sulfolobus tokodaii causes double-stranded DNA melting.</title>
        <authorList>
            <person name="Ma X."/>
            <person name="Hong Y."/>
            <person name="Han W."/>
            <person name="Sheng D."/>
            <person name="Ni J."/>
            <person name="Hou G."/>
            <person name="Shen Y."/>
        </authorList>
    </citation>
    <scope>FUNCTION AS A DNA-DEPENDENT ATPASE</scope>
    <scope>NO HELICASE ACTIVITY</scope>
    <scope>INTERACTION WITH BAX1</scope>
    <scope>DNA-BINDING</scope>
    <source>
        <strain>DSM 16993 / JCM 10545 / NBRC 100140 / 7</strain>
    </source>
</reference>
<reference evidence="16" key="3">
    <citation type="journal article" date="2018" name="Anal. Chem.">
        <title>Application of Electrochemical Devices to Characterize the Dynamic Actions of Helicases on DNA.</title>
        <authorList>
            <person name="Kahanda D."/>
            <person name="DuPrez K.T."/>
            <person name="Hilario E."/>
            <person name="McWilliams M.A."/>
            <person name="Wohlgamuth C.H."/>
            <person name="Fan L."/>
            <person name="Slinker J.D."/>
        </authorList>
    </citation>
    <scope>X-RAY CRYSTALLOGRAPHY (3.05 ANGSTROMS)</scope>
    <scope>FUNCTION AS A 3'-5' DNA HELICASE</scope>
</reference>
<reference key="4">
    <citation type="journal article" date="2023" name="Protein Sci.">
        <title>Molecular wrench activity of DNA helicases: Keys to modulation of rapid kinetics in DNA repair.</title>
        <authorList>
            <person name="Wettasinghe A.P."/>
            <person name="Seifi M.O."/>
            <person name="Bravo M."/>
            <person name="Adams A.C."/>
            <person name="Patel A."/>
            <person name="Lou M."/>
            <person name="Kahanda D."/>
            <person name="Peng H.C."/>
            <person name="Stelling A.L."/>
            <person name="Fan L."/>
            <person name="Slinker J.D."/>
        </authorList>
    </citation>
    <scope>FUNCTION AS A 3'-5' DNA HELICASE</scope>
</reference>
<reference evidence="18" key="5">
    <citation type="journal article" date="2020" name="Nucleic Acids Res.">
        <title>Structural basis of the XPB-Bax1 complex as a dynamic helicase-nuclease machinery for DNA repair.</title>
        <authorList>
            <person name="DuPrez K."/>
            <person name="He F."/>
            <person name="Chen Z."/>
            <person name="Hilario E."/>
            <person name="Fan L."/>
        </authorList>
    </citation>
    <scope>X-RAY CRYSTALLOGRAPHY (3.15 ANGSTROMS) IN COMPLEX WITH BAX1</scope>
    <scope>FUNCTION AS AN ATPASE</scope>
    <scope>INTERACTION WITH BAX1</scope>
    <scope>DOMAIN</scope>
</reference>
<reference evidence="17 19" key="6">
    <citation type="journal article" date="2020" name="Nucleic Acids Res.">
        <title>Structural basis of the XPB helicase-Bax1 nuclease complex interacting with the repair bubble DNA.</title>
        <authorList>
            <person name="He F."/>
            <person name="DuPrez K."/>
            <person name="Hilario E."/>
            <person name="Chen Z."/>
            <person name="Fan L."/>
        </authorList>
    </citation>
    <scope>X-RAY CRYSTALLOGRAPHY (2.96 ANGSTROMS) OF 2-439 IN COMPLEX WITH BAX1 WITH AND WITHOUT DNA</scope>
    <scope>FUNCTION AS A DNA TRANSLOCASE</scope>
    <scope>INTERACTION WITH BAX1</scope>
    <scope>DNA-BINDING</scope>
    <scope>POSSIBLE ATP-BINDING</scope>
    <scope>MUTAGENESIS OF 205-ARG--ASP-207; 258-ARG--HIS-299; 270-LEU--ARG-280 AND PHE-278</scope>
</reference>
<gene>
    <name evidence="15" type="primary">xpb2</name>
    <name type="synonym">ST1613</name>
    <name evidence="15" type="ordered locus">STK_16130</name>
</gene>
<organism>
    <name type="scientific">Sulfurisphaera tokodaii (strain DSM 16993 / JCM 10545 / NBRC 100140 / 7)</name>
    <name type="common">Sulfolobus tokodaii</name>
    <dbReference type="NCBI Taxonomy" id="273063"/>
    <lineage>
        <taxon>Archaea</taxon>
        <taxon>Thermoproteota</taxon>
        <taxon>Thermoprotei</taxon>
        <taxon>Sulfolobales</taxon>
        <taxon>Sulfolobaceae</taxon>
        <taxon>Sulfurisphaera</taxon>
    </lineage>
</organism>
<sequence length="439" mass="50634">MVYLRYFKGLILSDAYAPGLKWSDELKAYSALAFKYRDVRKYFLEKEIEVEENVIDSLPFPLIKDKIELRDYQAEAVKAWLKEKRGIIVLPTGAGKTQVALKIVSIMKVATLIVVPTIDLITQWKERINKYLDFDPGIIGGGEDSLKGITVITYDSAYTRAEELGNKFPLLIFDEVHHLPSEGYSIMAQLFASPYRLGLTATPERDDGKHELYPILVGPIVYRKSVEELAGKYIAKYKIKKLYVSLTNEEKKRYDGLRKKLKDFLSSRGLKLQNLDDFHRLVKLAAKDKEAREALLAWHESLNIAVNSQSKIEKLREILQEYKNEKIIVFTRDTQMAYRISKTFLIPVVTYKTDKDEREEILQKFRDGEYRVIVASTVFDEGVDVPDATLAIVMGGYGTKRQFLQRLGRILRKKDKEALLIEIVTKGTADYRLSRRRRE</sequence>